<sequence>MFSEQAAQRAHTLLAPPSASNATFARVPVATYTNSSQPFRLGERSFNRQYAHIYATRLIQMRPFLVSRAQQHWGSRVEVKKLCELQPGEQCCVVGTLFKAMSLQPSILREISEEHNLVPQPPRSKYIHPDDELVLEDELQRIKLKGTIDVSKLVTGTVLAVLGSAKDDGRFQVEDHCFADLAPQKPVPPLDTDRFVLLVSGLGLGGGGGESLLGTQLLVDVVTGQLGDEGEQCSAAHVSRVILAGNLLSHNTQSRDSINKAKYLTKKTQAASVEAVKMLDEILLQLSASVPVDVMPGEFDPTNYTLPQQPLHPCMFPLATAYSTLQLVTNPYQATIDGVRFLGTSGQNVSDIFRYSSMEDHLEILEWTLRVRHISPTAPDTLGCYPFYKTDPFIFPECPHVYFCGNTPSFGSKIIRGPEDQVVLLVAVPDFSSTQTACLVNLRSLACQPISFAGFGAEQEDLEGLGLGP</sequence>
<proteinExistence type="evidence at protein level"/>
<dbReference type="EMBL" id="Z72486">
    <property type="protein sequence ID" value="CAA96567.1"/>
    <property type="molecule type" value="mRNA"/>
</dbReference>
<dbReference type="EMBL" id="AL627069">
    <property type="status" value="NOT_ANNOTATED_CDS"/>
    <property type="molecule type" value="Genomic_DNA"/>
</dbReference>
<dbReference type="EMBL" id="CH466574">
    <property type="protein sequence ID" value="EDL40563.1"/>
    <property type="molecule type" value="Genomic_DNA"/>
</dbReference>
<dbReference type="EMBL" id="BC003342">
    <property type="protein sequence ID" value="AAH03342.1"/>
    <property type="molecule type" value="mRNA"/>
</dbReference>
<dbReference type="CCDS" id="CCDS24407.1"/>
<dbReference type="RefSeq" id="NP_001348871.1">
    <property type="nucleotide sequence ID" value="NM_001361942.1"/>
</dbReference>
<dbReference type="RefSeq" id="NP_032920.2">
    <property type="nucleotide sequence ID" value="NM_008894.2"/>
</dbReference>
<dbReference type="RefSeq" id="XP_006514650.1">
    <property type="nucleotide sequence ID" value="XM_006514587.3"/>
</dbReference>
<dbReference type="SMR" id="O35654"/>
<dbReference type="BioGRID" id="202291">
    <property type="interactions" value="2"/>
</dbReference>
<dbReference type="ComplexPortal" id="CPX-2098">
    <property type="entry name" value="DNA polymerase delta complex"/>
</dbReference>
<dbReference type="CORUM" id="O35654"/>
<dbReference type="FunCoup" id="O35654">
    <property type="interactions" value="1080"/>
</dbReference>
<dbReference type="IntAct" id="O35654">
    <property type="interactions" value="2"/>
</dbReference>
<dbReference type="STRING" id="10090.ENSMUSP00000099986"/>
<dbReference type="GlyGen" id="O35654">
    <property type="glycosylation" value="4 sites, 1 O-linked glycan (3 sites)"/>
</dbReference>
<dbReference type="iPTMnet" id="O35654"/>
<dbReference type="PhosphoSitePlus" id="O35654"/>
<dbReference type="SwissPalm" id="O35654"/>
<dbReference type="PaxDb" id="10090-ENSMUSP00000099986"/>
<dbReference type="PeptideAtlas" id="O35654"/>
<dbReference type="ProteomicsDB" id="279806"/>
<dbReference type="Pumba" id="O35654"/>
<dbReference type="Antibodypedia" id="13259">
    <property type="antibodies" value="203 antibodies from 28 providers"/>
</dbReference>
<dbReference type="DNASU" id="18972"/>
<dbReference type="Ensembl" id="ENSMUST00000102922.10">
    <property type="protein sequence ID" value="ENSMUSP00000099986.4"/>
    <property type="gene ID" value="ENSMUSG00000020471.12"/>
</dbReference>
<dbReference type="GeneID" id="18972"/>
<dbReference type="KEGG" id="mmu:18972"/>
<dbReference type="UCSC" id="uc007hxk.2">
    <property type="organism name" value="mouse"/>
</dbReference>
<dbReference type="AGR" id="MGI:1097163"/>
<dbReference type="CTD" id="5425"/>
<dbReference type="MGI" id="MGI:1097163">
    <property type="gene designation" value="Pold2"/>
</dbReference>
<dbReference type="VEuPathDB" id="HostDB:ENSMUSG00000020471"/>
<dbReference type="eggNOG" id="KOG2732">
    <property type="taxonomic scope" value="Eukaryota"/>
</dbReference>
<dbReference type="GeneTree" id="ENSGT00390000006780"/>
<dbReference type="HOGENOM" id="CLU_021763_0_0_1"/>
<dbReference type="InParanoid" id="O35654"/>
<dbReference type="OMA" id="HCILIGT"/>
<dbReference type="OrthoDB" id="3763at2759"/>
<dbReference type="PhylomeDB" id="O35654"/>
<dbReference type="TreeFam" id="TF101073"/>
<dbReference type="Reactome" id="R-MMU-110314">
    <property type="pathway name" value="Recognition of DNA damage by PCNA-containing replication complex"/>
</dbReference>
<dbReference type="Reactome" id="R-MMU-174411">
    <property type="pathway name" value="Polymerase switching on the C-strand of the telomere"/>
</dbReference>
<dbReference type="Reactome" id="R-MMU-174414">
    <property type="pathway name" value="Processive synthesis on the C-strand of the telomere"/>
</dbReference>
<dbReference type="Reactome" id="R-MMU-174417">
    <property type="pathway name" value="Telomere C-strand (Lagging Strand) Synthesis"/>
</dbReference>
<dbReference type="Reactome" id="R-MMU-174437">
    <property type="pathway name" value="Removal of the Flap Intermediate from the C-strand"/>
</dbReference>
<dbReference type="Reactome" id="R-MMU-5358565">
    <property type="pathway name" value="Mismatch repair (MMR) directed by MSH2:MSH6 (MutSalpha)"/>
</dbReference>
<dbReference type="Reactome" id="R-MMU-5358606">
    <property type="pathway name" value="Mismatch repair (MMR) directed by MSH2:MSH3 (MutSbeta)"/>
</dbReference>
<dbReference type="Reactome" id="R-MMU-5651801">
    <property type="pathway name" value="PCNA-Dependent Long Patch Base Excision Repair"/>
</dbReference>
<dbReference type="Reactome" id="R-MMU-5656169">
    <property type="pathway name" value="Termination of translesion DNA synthesis"/>
</dbReference>
<dbReference type="Reactome" id="R-MMU-5685942">
    <property type="pathway name" value="HDR through Homologous Recombination (HRR)"/>
</dbReference>
<dbReference type="Reactome" id="R-MMU-5696397">
    <property type="pathway name" value="Gap-filling DNA repair synthesis and ligation in GG-NER"/>
</dbReference>
<dbReference type="Reactome" id="R-MMU-5696400">
    <property type="pathway name" value="Dual Incision in GG-NER"/>
</dbReference>
<dbReference type="Reactome" id="R-MMU-6782135">
    <property type="pathway name" value="Dual incision in TC-NER"/>
</dbReference>
<dbReference type="Reactome" id="R-MMU-6782210">
    <property type="pathway name" value="Gap-filling DNA repair synthesis and ligation in TC-NER"/>
</dbReference>
<dbReference type="Reactome" id="R-MMU-69091">
    <property type="pathway name" value="Polymerase switching"/>
</dbReference>
<dbReference type="Reactome" id="R-MMU-69166">
    <property type="pathway name" value="Removal of the Flap Intermediate"/>
</dbReference>
<dbReference type="Reactome" id="R-MMU-69183">
    <property type="pathway name" value="Processive synthesis on the lagging strand"/>
</dbReference>
<dbReference type="BioGRID-ORCS" id="18972">
    <property type="hits" value="27 hits in 81 CRISPR screens"/>
</dbReference>
<dbReference type="ChiTaRS" id="Pold2">
    <property type="organism name" value="mouse"/>
</dbReference>
<dbReference type="PRO" id="PR:O35654"/>
<dbReference type="Proteomes" id="UP000000589">
    <property type="component" value="Chromosome 11"/>
</dbReference>
<dbReference type="RNAct" id="O35654">
    <property type="molecule type" value="protein"/>
</dbReference>
<dbReference type="Bgee" id="ENSMUSG00000020471">
    <property type="expression patterns" value="Expressed in yolk sac and 252 other cell types or tissues"/>
</dbReference>
<dbReference type="ExpressionAtlas" id="O35654">
    <property type="expression patterns" value="baseline and differential"/>
</dbReference>
<dbReference type="GO" id="GO:0043625">
    <property type="term" value="C:delta DNA polymerase complex"/>
    <property type="evidence" value="ECO:0000314"/>
    <property type="project" value="UniProtKB"/>
</dbReference>
<dbReference type="GO" id="GO:0005654">
    <property type="term" value="C:nucleoplasm"/>
    <property type="evidence" value="ECO:0007669"/>
    <property type="project" value="Ensembl"/>
</dbReference>
<dbReference type="GO" id="GO:0016035">
    <property type="term" value="C:zeta DNA polymerase complex"/>
    <property type="evidence" value="ECO:0007669"/>
    <property type="project" value="Ensembl"/>
</dbReference>
<dbReference type="GO" id="GO:0003677">
    <property type="term" value="F:DNA binding"/>
    <property type="evidence" value="ECO:0007669"/>
    <property type="project" value="InterPro"/>
</dbReference>
<dbReference type="GO" id="GO:0071897">
    <property type="term" value="P:DNA biosynthetic process"/>
    <property type="evidence" value="ECO:0000314"/>
    <property type="project" value="UniProtKB"/>
</dbReference>
<dbReference type="GO" id="GO:0006261">
    <property type="term" value="P:DNA-templated DNA replication"/>
    <property type="evidence" value="ECO:0000266"/>
    <property type="project" value="ComplexPortal"/>
</dbReference>
<dbReference type="GO" id="GO:0042276">
    <property type="term" value="P:error-prone translesion synthesis"/>
    <property type="evidence" value="ECO:0007669"/>
    <property type="project" value="Ensembl"/>
</dbReference>
<dbReference type="CDD" id="cd07387">
    <property type="entry name" value="MPP_PolD2_C"/>
    <property type="match status" value="1"/>
</dbReference>
<dbReference type="FunFam" id="3.60.21.50:FF:000001">
    <property type="entry name" value="DNA polymerase delta 2, accessory subunit"/>
    <property type="match status" value="1"/>
</dbReference>
<dbReference type="FunFam" id="3.60.21.50:FF:000008">
    <property type="entry name" value="DNA polymerase delta 2, accessory subunit"/>
    <property type="match status" value="1"/>
</dbReference>
<dbReference type="Gene3D" id="3.60.21.50">
    <property type="match status" value="2"/>
</dbReference>
<dbReference type="InterPro" id="IPR007185">
    <property type="entry name" value="DNA_pol_a/d/e_bsu"/>
</dbReference>
<dbReference type="InterPro" id="IPR040663">
    <property type="entry name" value="DNA_pol_D_N"/>
</dbReference>
<dbReference type="InterPro" id="IPR024826">
    <property type="entry name" value="DNA_pol_delta/II_ssu"/>
</dbReference>
<dbReference type="InterPro" id="IPR041863">
    <property type="entry name" value="PolD2_C"/>
</dbReference>
<dbReference type="PANTHER" id="PTHR10416">
    <property type="entry name" value="DNA POLYMERASE DELTA SUBUNIT 2"/>
    <property type="match status" value="1"/>
</dbReference>
<dbReference type="PANTHER" id="PTHR10416:SF0">
    <property type="entry name" value="DNA POLYMERASE DELTA SUBUNIT 2"/>
    <property type="match status" value="1"/>
</dbReference>
<dbReference type="Pfam" id="PF18018">
    <property type="entry name" value="DNA_pol_D_N"/>
    <property type="match status" value="1"/>
</dbReference>
<dbReference type="Pfam" id="PF04042">
    <property type="entry name" value="DNA_pol_E_B"/>
    <property type="match status" value="1"/>
</dbReference>
<name>DPOD2_MOUSE</name>
<comment type="function">
    <text evidence="1">Accessory component of both the DNA polymerase delta complex and the DNA polymerase zeta complex. As a component of the trimeric and tetrameric DNA polymerase delta complexes (Pol-delta3 and Pol-delta4, respectively), plays a role in high fidelity genome replication, including in lagging strand synthesis, and repair. Pol-delta3 and Pol-delta4 are characterized by the absence or the presence of POLD4. They exhibit differences in catalytic activity. Most notably, Pol-delta3 shows higher proofreading activity than Pol-delta4. Although both Pol-delta3 and Pol-delta4 process Okazaki fragments in vitro, Pol-delta3 may also be better suited to fulfill this task, exhibiting near-absence of strand displacement activity compared to Pol-delta4 and stalling on encounter with the 5'-blocking oligonucleotides. Pol-delta3 idling process may avoid the formation of a gap, while maintaining a nick that can be readily ligated. Along with DNA polymerase kappa, DNA polymerase delta carries out approximately half of nucleotide excision repair (NER) synthesis following UV irradiation. Under conditions of DNA replication stress, required for the repair of broken replication forks through break-induced replication (BIR). Involved in the translesion synthesis (TLS) of templates carrying O6-methylguanine or abasic sites performed by Pol-delta4, independently of DNA polymerase zeta (REV3L) or eta (POLH). Facilitates abasic site bypass by DNA polymerase delta by promoting extension from the nucleotide inserted opposite the lesion. Also involved in TLS as a component of the DNA polymerase zeta complex. Along with POLD3, dramatically increases the efficiency and processivity of DNA synthesis of the DNA polymerase zeta complex compared to the minimal zeta complex, consisting of only REV3L and REV7.</text>
</comment>
<comment type="subunit">
    <text evidence="1 2">Component of both the DNA polymerase delta and DNA polymerase zeta complexes. Component of the tetrameric DNA polymerase delta complex (Pol-delta4), which consists of POLD1/p125, POLD2/p50, POLD3/p66/p68 and POLD4/p12, with POLD1 bearing DNA polymerase and 3' to 5' proofreading exonuclease activities. Within Pol-delta4, directly interacts with POLD1, POLD3 and POLD4. Following stress caused by DNA damaging agents or by replication stress, POLD4 is degraded and Pol-delta4 is converted into a trimeric form of the complex (Pol-delta3), which consists of POLD1, POLD2 and POLD3. Pol-delta3 is the major form occurring at S phase replication sites, as well as DNA damage sites. Also observed as a dimeric complex with POLD2 (Pol-delta2 complex). Pol-delta2 is relatively insensitive to the PCNA stimulation (2-5-fold) compared to Pol-delta4 that is stimulated by over 50-fold. Contrary to the other components of Pol-delta4, does not directly interact with PCNA. As POLD1 and POLD4, directly interacts with WRNIP1; this interaction stimulates DNA polymerase delta-mediated DNA synthesis, independently of the presence of PCNA. This stimulation may be due predominantly to an increase of initiation frequency and also to increased processivity. Directly interacts with POLDIP2 and POLDIP3. Directly interacts with KCTD13/PDIP1; in the presence of PCNA, this interaction may stimulate DNA polymerase activity. Component of the tetrameric Pol-zeta complex (Pol-zeta4), which consists of REV3L, MAD2L2, POLD2 and POLD3, with REV3L bearing DNA polymerase catalytic activity (By similarity). Interacts with KCTD10 (By similarity).</text>
</comment>
<comment type="subcellular location">
    <subcellularLocation>
        <location evidence="1">Nucleus</location>
    </subcellularLocation>
    <text evidence="1">Recruited to DNA damage sites within 2 hours following UV irradiation.</text>
</comment>
<comment type="similarity">
    <text evidence="3">Belongs to the DNA polymerase delta/II small subunit family.</text>
</comment>
<protein>
    <recommendedName>
        <fullName>DNA polymerase delta subunit 2</fullName>
    </recommendedName>
    <alternativeName>
        <fullName>DNA polymerase delta subunit p50</fullName>
    </alternativeName>
</protein>
<gene>
    <name type="primary">Pold2</name>
</gene>
<feature type="chain" id="PRO_0000096167" description="DNA polymerase delta subunit 2">
    <location>
        <begin position="1"/>
        <end position="469"/>
    </location>
</feature>
<feature type="modified residue" description="N-acetylmethionine" evidence="1">
    <location>
        <position position="1"/>
    </location>
</feature>
<feature type="modified residue" description="Phosphoserine" evidence="1">
    <location>
        <position position="257"/>
    </location>
</feature>
<feature type="sequence conflict" description="In Ref. 1; CAA96567." evidence="3" ref="1">
    <original>S</original>
    <variation>T</variation>
    <location>
        <position position="67"/>
    </location>
</feature>
<evidence type="ECO:0000250" key="1">
    <source>
        <dbReference type="UniProtKB" id="P49005"/>
    </source>
</evidence>
<evidence type="ECO:0000250" key="2">
    <source>
        <dbReference type="UniProtKB" id="Q6AXY4"/>
    </source>
</evidence>
<evidence type="ECO:0000305" key="3"/>
<accession>O35654</accession>
<accession>Q99J61</accession>
<keyword id="KW-0007">Acetylation</keyword>
<keyword id="KW-0227">DNA damage</keyword>
<keyword id="KW-0228">DNA excision</keyword>
<keyword id="KW-0234">DNA repair</keyword>
<keyword id="KW-0235">DNA replication</keyword>
<keyword id="KW-0539">Nucleus</keyword>
<keyword id="KW-0597">Phosphoprotein</keyword>
<keyword id="KW-1185">Reference proteome</keyword>
<organism>
    <name type="scientific">Mus musculus</name>
    <name type="common">Mouse</name>
    <dbReference type="NCBI Taxonomy" id="10090"/>
    <lineage>
        <taxon>Eukaryota</taxon>
        <taxon>Metazoa</taxon>
        <taxon>Chordata</taxon>
        <taxon>Craniata</taxon>
        <taxon>Vertebrata</taxon>
        <taxon>Euteleostomi</taxon>
        <taxon>Mammalia</taxon>
        <taxon>Eutheria</taxon>
        <taxon>Euarchontoglires</taxon>
        <taxon>Glires</taxon>
        <taxon>Rodentia</taxon>
        <taxon>Myomorpha</taxon>
        <taxon>Muroidea</taxon>
        <taxon>Muridae</taxon>
        <taxon>Murinae</taxon>
        <taxon>Mus</taxon>
        <taxon>Mus</taxon>
    </lineage>
</organism>
<reference key="1">
    <citation type="journal article" date="1997" name="Genomics">
        <title>Cloning, chromosomal localization, and interspecies interaction of mouse DNA polymerase delta small subunit (PolD2).</title>
        <authorList>
            <person name="Hindges R."/>
            <person name="Huebscher U."/>
        </authorList>
    </citation>
    <scope>NUCLEOTIDE SEQUENCE [MRNA]</scope>
</reference>
<reference key="2">
    <citation type="journal article" date="2009" name="PLoS Biol.">
        <title>Lineage-specific biology revealed by a finished genome assembly of the mouse.</title>
        <authorList>
            <person name="Church D.M."/>
            <person name="Goodstadt L."/>
            <person name="Hillier L.W."/>
            <person name="Zody M.C."/>
            <person name="Goldstein S."/>
            <person name="She X."/>
            <person name="Bult C.J."/>
            <person name="Agarwala R."/>
            <person name="Cherry J.L."/>
            <person name="DiCuccio M."/>
            <person name="Hlavina W."/>
            <person name="Kapustin Y."/>
            <person name="Meric P."/>
            <person name="Maglott D."/>
            <person name="Birtle Z."/>
            <person name="Marques A.C."/>
            <person name="Graves T."/>
            <person name="Zhou S."/>
            <person name="Teague B."/>
            <person name="Potamousis K."/>
            <person name="Churas C."/>
            <person name="Place M."/>
            <person name="Herschleb J."/>
            <person name="Runnheim R."/>
            <person name="Forrest D."/>
            <person name="Amos-Landgraf J."/>
            <person name="Schwartz D.C."/>
            <person name="Cheng Z."/>
            <person name="Lindblad-Toh K."/>
            <person name="Eichler E.E."/>
            <person name="Ponting C.P."/>
        </authorList>
    </citation>
    <scope>NUCLEOTIDE SEQUENCE [LARGE SCALE GENOMIC DNA]</scope>
    <source>
        <strain>C57BL/6J</strain>
    </source>
</reference>
<reference key="3">
    <citation type="submission" date="2005-07" db="EMBL/GenBank/DDBJ databases">
        <authorList>
            <person name="Mural R.J."/>
            <person name="Adams M.D."/>
            <person name="Myers E.W."/>
            <person name="Smith H.O."/>
            <person name="Venter J.C."/>
        </authorList>
    </citation>
    <scope>NUCLEOTIDE SEQUENCE [LARGE SCALE GENOMIC DNA]</scope>
</reference>
<reference key="4">
    <citation type="journal article" date="2004" name="Genome Res.">
        <title>The status, quality, and expansion of the NIH full-length cDNA project: the Mammalian Gene Collection (MGC).</title>
        <authorList>
            <consortium name="The MGC Project Team"/>
        </authorList>
    </citation>
    <scope>NUCLEOTIDE SEQUENCE [LARGE SCALE MRNA]</scope>
    <source>
        <strain>NMRI</strain>
        <tissue>Mammary tumor</tissue>
    </source>
</reference>
<reference key="5">
    <citation type="journal article" date="2010" name="Cell">
        <title>A tissue-specific atlas of mouse protein phosphorylation and expression.</title>
        <authorList>
            <person name="Huttlin E.L."/>
            <person name="Jedrychowski M.P."/>
            <person name="Elias J.E."/>
            <person name="Goswami T."/>
            <person name="Rad R."/>
            <person name="Beausoleil S.A."/>
            <person name="Villen J."/>
            <person name="Haas W."/>
            <person name="Sowa M.E."/>
            <person name="Gygi S.P."/>
        </authorList>
    </citation>
    <scope>IDENTIFICATION BY MASS SPECTROMETRY [LARGE SCALE ANALYSIS]</scope>
    <source>
        <tissue>Spleen</tissue>
        <tissue>Testis</tissue>
    </source>
</reference>